<comment type="function">
    <text evidence="1">This is one of the proteins that bind and probably mediate the attachment of the 5S RNA into the large ribosomal subunit, where it forms part of the central protuberance. In the 70S ribosome it contacts protein S13 of the 30S subunit (bridge B1b), connecting the 2 subunits; this bridge is implicated in subunit movement. Contacts the P site tRNA; the 5S rRNA and some of its associated proteins might help stabilize positioning of ribosome-bound tRNAs.</text>
</comment>
<comment type="subunit">
    <text evidence="1">Part of the 50S ribosomal subunit; part of the 5S rRNA/L5/L18/L25 subcomplex. Contacts the 5S rRNA and the P site tRNA. Forms a bridge to the 30S subunit in the 70S ribosome.</text>
</comment>
<comment type="similarity">
    <text evidence="1">Belongs to the universal ribosomal protein uL5 family.</text>
</comment>
<accession>Q9JX13</accession>
<accession>A1INX8</accession>
<proteinExistence type="inferred from homology"/>
<keyword id="KW-0687">Ribonucleoprotein</keyword>
<keyword id="KW-0689">Ribosomal protein</keyword>
<keyword id="KW-0694">RNA-binding</keyword>
<keyword id="KW-0699">rRNA-binding</keyword>
<keyword id="KW-0820">tRNA-binding</keyword>
<dbReference type="EMBL" id="AL157959">
    <property type="protein sequence ID" value="CAM07435.1"/>
    <property type="molecule type" value="Genomic_DNA"/>
</dbReference>
<dbReference type="PIR" id="C82004">
    <property type="entry name" value="C82004"/>
</dbReference>
<dbReference type="RefSeq" id="WP_002235371.1">
    <property type="nucleotide sequence ID" value="NC_003116.1"/>
</dbReference>
<dbReference type="SMR" id="Q9JX13"/>
<dbReference type="EnsemblBacteria" id="CAM07435">
    <property type="protein sequence ID" value="CAM07435"/>
    <property type="gene ID" value="NMA0117"/>
</dbReference>
<dbReference type="GeneID" id="93387229"/>
<dbReference type="KEGG" id="nma:NMA0117"/>
<dbReference type="HOGENOM" id="CLU_061015_2_1_4"/>
<dbReference type="Proteomes" id="UP000000626">
    <property type="component" value="Chromosome"/>
</dbReference>
<dbReference type="GO" id="GO:1990904">
    <property type="term" value="C:ribonucleoprotein complex"/>
    <property type="evidence" value="ECO:0007669"/>
    <property type="project" value="UniProtKB-KW"/>
</dbReference>
<dbReference type="GO" id="GO:0005840">
    <property type="term" value="C:ribosome"/>
    <property type="evidence" value="ECO:0007669"/>
    <property type="project" value="UniProtKB-KW"/>
</dbReference>
<dbReference type="GO" id="GO:0019843">
    <property type="term" value="F:rRNA binding"/>
    <property type="evidence" value="ECO:0007669"/>
    <property type="project" value="UniProtKB-UniRule"/>
</dbReference>
<dbReference type="GO" id="GO:0003735">
    <property type="term" value="F:structural constituent of ribosome"/>
    <property type="evidence" value="ECO:0007669"/>
    <property type="project" value="InterPro"/>
</dbReference>
<dbReference type="GO" id="GO:0000049">
    <property type="term" value="F:tRNA binding"/>
    <property type="evidence" value="ECO:0007669"/>
    <property type="project" value="UniProtKB-UniRule"/>
</dbReference>
<dbReference type="GO" id="GO:0006412">
    <property type="term" value="P:translation"/>
    <property type="evidence" value="ECO:0007669"/>
    <property type="project" value="UniProtKB-UniRule"/>
</dbReference>
<dbReference type="FunFam" id="3.30.1440.10:FF:000001">
    <property type="entry name" value="50S ribosomal protein L5"/>
    <property type="match status" value="1"/>
</dbReference>
<dbReference type="Gene3D" id="3.30.1440.10">
    <property type="match status" value="1"/>
</dbReference>
<dbReference type="HAMAP" id="MF_01333_B">
    <property type="entry name" value="Ribosomal_uL5_B"/>
    <property type="match status" value="1"/>
</dbReference>
<dbReference type="InterPro" id="IPR002132">
    <property type="entry name" value="Ribosomal_uL5"/>
</dbReference>
<dbReference type="InterPro" id="IPR020930">
    <property type="entry name" value="Ribosomal_uL5_bac-type"/>
</dbReference>
<dbReference type="InterPro" id="IPR031309">
    <property type="entry name" value="Ribosomal_uL5_C"/>
</dbReference>
<dbReference type="InterPro" id="IPR020929">
    <property type="entry name" value="Ribosomal_uL5_CS"/>
</dbReference>
<dbReference type="InterPro" id="IPR022803">
    <property type="entry name" value="Ribosomal_uL5_dom_sf"/>
</dbReference>
<dbReference type="InterPro" id="IPR031310">
    <property type="entry name" value="Ribosomal_uL5_N"/>
</dbReference>
<dbReference type="NCBIfam" id="NF000585">
    <property type="entry name" value="PRK00010.1"/>
    <property type="match status" value="1"/>
</dbReference>
<dbReference type="PANTHER" id="PTHR11994">
    <property type="entry name" value="60S RIBOSOMAL PROTEIN L11-RELATED"/>
    <property type="match status" value="1"/>
</dbReference>
<dbReference type="Pfam" id="PF00281">
    <property type="entry name" value="Ribosomal_L5"/>
    <property type="match status" value="1"/>
</dbReference>
<dbReference type="Pfam" id="PF00673">
    <property type="entry name" value="Ribosomal_L5_C"/>
    <property type="match status" value="1"/>
</dbReference>
<dbReference type="PIRSF" id="PIRSF002161">
    <property type="entry name" value="Ribosomal_L5"/>
    <property type="match status" value="1"/>
</dbReference>
<dbReference type="SUPFAM" id="SSF55282">
    <property type="entry name" value="RL5-like"/>
    <property type="match status" value="1"/>
</dbReference>
<dbReference type="PROSITE" id="PS00358">
    <property type="entry name" value="RIBOSOMAL_L5"/>
    <property type="match status" value="1"/>
</dbReference>
<reference key="1">
    <citation type="journal article" date="2000" name="Nature">
        <title>Complete DNA sequence of a serogroup A strain of Neisseria meningitidis Z2491.</title>
        <authorList>
            <person name="Parkhill J."/>
            <person name="Achtman M."/>
            <person name="James K.D."/>
            <person name="Bentley S.D."/>
            <person name="Churcher C.M."/>
            <person name="Klee S.R."/>
            <person name="Morelli G."/>
            <person name="Basham D."/>
            <person name="Brown D."/>
            <person name="Chillingworth T."/>
            <person name="Davies R.M."/>
            <person name="Davis P."/>
            <person name="Devlin K."/>
            <person name="Feltwell T."/>
            <person name="Hamlin N."/>
            <person name="Holroyd S."/>
            <person name="Jagels K."/>
            <person name="Leather S."/>
            <person name="Moule S."/>
            <person name="Mungall K.L."/>
            <person name="Quail M.A."/>
            <person name="Rajandream M.A."/>
            <person name="Rutherford K.M."/>
            <person name="Simmonds M."/>
            <person name="Skelton J."/>
            <person name="Whitehead S."/>
            <person name="Spratt B.G."/>
            <person name="Barrell B.G."/>
        </authorList>
    </citation>
    <scope>NUCLEOTIDE SEQUENCE [LARGE SCALE GENOMIC DNA]</scope>
    <source>
        <strain>DSM 15465 / Z2491</strain>
    </source>
</reference>
<evidence type="ECO:0000255" key="1">
    <source>
        <dbReference type="HAMAP-Rule" id="MF_01333"/>
    </source>
</evidence>
<evidence type="ECO:0000305" key="2"/>
<organism>
    <name type="scientific">Neisseria meningitidis serogroup A / serotype 4A (strain DSM 15465 / Z2491)</name>
    <dbReference type="NCBI Taxonomy" id="122587"/>
    <lineage>
        <taxon>Bacteria</taxon>
        <taxon>Pseudomonadati</taxon>
        <taxon>Pseudomonadota</taxon>
        <taxon>Betaproteobacteria</taxon>
        <taxon>Neisseriales</taxon>
        <taxon>Neisseriaceae</taxon>
        <taxon>Neisseria</taxon>
    </lineage>
</organism>
<protein>
    <recommendedName>
        <fullName evidence="1">Large ribosomal subunit protein uL5</fullName>
    </recommendedName>
    <alternativeName>
        <fullName evidence="2">50S ribosomal protein L5</fullName>
    </alternativeName>
</protein>
<gene>
    <name evidence="1" type="primary">rplE</name>
    <name type="ordered locus">NMA0117</name>
</gene>
<name>RL5_NEIMA</name>
<feature type="chain" id="PRO_0000124957" description="Large ribosomal subunit protein uL5">
    <location>
        <begin position="1"/>
        <end position="179"/>
    </location>
</feature>
<sequence>MARLREFYKETVVPELVKQFGYKSVMEVPRIEKITLNMGVGEAIADKKVMEHAVSDLEKIAGQKPVVTVARKSIAGFKIRDNYPVGCKVTLRRDQMFEFLDRLITIALPRVRDFRGVSGKSFDGRGNYNMGVREQIIFPEIEYDKIDALRGLNITITTTAKTDEEAKALLSLFKFPFKG</sequence>